<protein>
    <recommendedName>
        <fullName>Protein Vpr</fullName>
    </recommendedName>
    <alternativeName>
        <fullName>Viral protein R</fullName>
    </alternativeName>
</protein>
<feature type="chain" id="PRO_0000246769" description="Protein Vpr">
    <location>
        <begin position="1"/>
        <end position="101"/>
    </location>
</feature>
<feature type="modified residue" description="Phosphoserine; by host" evidence="1">
    <location>
        <position position="84"/>
    </location>
</feature>
<proteinExistence type="inferred from homology"/>
<evidence type="ECO:0000250" key="1"/>
<sequence length="101" mass="11287">MAEAVPEIPPEDKNPQREPWEQWVVDVLEEIKQEALKHFDPRLLTALGNFIYNRHGNTLEGAGELIKLLQRALFLHFRGGCQHSRIGQPGGGNPLSAIPPS</sequence>
<name>VPR_HV2EH</name>
<keyword id="KW-0010">Activator</keyword>
<keyword id="KW-0014">AIDS</keyword>
<keyword id="KW-0131">Cell cycle</keyword>
<keyword id="KW-1079">Host G2/M cell cycle arrest by virus</keyword>
<keyword id="KW-1048">Host nucleus</keyword>
<keyword id="KW-0945">Host-virus interaction</keyword>
<keyword id="KW-1121">Modulation of host cell cycle by virus</keyword>
<keyword id="KW-0597">Phosphoprotein</keyword>
<keyword id="KW-0804">Transcription</keyword>
<keyword id="KW-0805">Transcription regulation</keyword>
<keyword id="KW-1163">Viral penetration into host nucleus</keyword>
<keyword id="KW-0946">Virion</keyword>
<keyword id="KW-1160">Virus entry into host cell</keyword>
<comment type="function">
    <text evidence="1">Stimulates gene expression driven by the HIV-2 LTR. Prevents infected cells from undergoing mitosis and proliferating, by inducing arrest or delay in the G2 phase of the cell cycle. Cell cycle arrest creates a favorable environment for maximizing viral expression and production (By similarity).</text>
</comment>
<comment type="subunit">
    <text evidence="1">Interacts with human UNG.</text>
</comment>
<comment type="subcellular location">
    <subcellularLocation>
        <location>Virion</location>
    </subcellularLocation>
    <subcellularLocation>
        <location evidence="1">Host nucleus</location>
    </subcellularLocation>
</comment>
<dbReference type="EMBL" id="U27200">
    <property type="status" value="NOT_ANNOTATED_CDS"/>
    <property type="molecule type" value="Genomic_DNA"/>
</dbReference>
<dbReference type="SMR" id="P0C1P6"/>
<dbReference type="Proteomes" id="UP000007423">
    <property type="component" value="Segment"/>
</dbReference>
<dbReference type="GO" id="GO:0043657">
    <property type="term" value="C:host cell"/>
    <property type="evidence" value="ECO:0007669"/>
    <property type="project" value="GOC"/>
</dbReference>
<dbReference type="GO" id="GO:0042025">
    <property type="term" value="C:host cell nucleus"/>
    <property type="evidence" value="ECO:0007669"/>
    <property type="project" value="UniProtKB-SubCell"/>
</dbReference>
<dbReference type="GO" id="GO:0044423">
    <property type="term" value="C:virion component"/>
    <property type="evidence" value="ECO:0007669"/>
    <property type="project" value="UniProtKB-KW"/>
</dbReference>
<dbReference type="GO" id="GO:0046718">
    <property type="term" value="P:symbiont entry into host cell"/>
    <property type="evidence" value="ECO:0007669"/>
    <property type="project" value="UniProtKB-KW"/>
</dbReference>
<dbReference type="GO" id="GO:0039592">
    <property type="term" value="P:symbiont-mediated arrest of host cell cycle during G2/M transition"/>
    <property type="evidence" value="ECO:0007669"/>
    <property type="project" value="UniProtKB-KW"/>
</dbReference>
<dbReference type="GO" id="GO:0075732">
    <property type="term" value="P:viral penetration into host nucleus"/>
    <property type="evidence" value="ECO:0007669"/>
    <property type="project" value="UniProtKB-KW"/>
</dbReference>
<dbReference type="Gene3D" id="6.10.210.10">
    <property type="match status" value="1"/>
</dbReference>
<dbReference type="Gene3D" id="1.20.5.90">
    <property type="entry name" value="VpR/VpX protein, C-terminal domain"/>
    <property type="match status" value="1"/>
</dbReference>
<dbReference type="InterPro" id="IPR000012">
    <property type="entry name" value="RetroV_VpR/X"/>
</dbReference>
<dbReference type="Pfam" id="PF00522">
    <property type="entry name" value="VPR"/>
    <property type="match status" value="1"/>
</dbReference>
<dbReference type="PRINTS" id="PR00444">
    <property type="entry name" value="HIVVPRVPX"/>
</dbReference>
<accession>P0C1P6</accession>
<organismHost>
    <name type="scientific">Homo sapiens</name>
    <name type="common">Human</name>
    <dbReference type="NCBI Taxonomy" id="9606"/>
</organismHost>
<reference key="1">
    <citation type="journal article" date="1995" name="AIDS Res. Hum. Retroviruses">
        <title>Nucleotide sequence of the HIV-2 EHO genome, a divergent HIV-2 isolate.</title>
        <authorList>
            <person name="Galabru J."/>
            <person name="Rey-Cuille M.A."/>
            <person name="Hovanessian A.G."/>
        </authorList>
    </citation>
    <scope>NUCLEOTIDE SEQUENCE [GENOMIC DNA]</scope>
</reference>
<organism>
    <name type="scientific">Human immunodeficiency virus type 2 subtype B (isolate EHO)</name>
    <name type="common">HIV-2</name>
    <dbReference type="NCBI Taxonomy" id="388821"/>
    <lineage>
        <taxon>Viruses</taxon>
        <taxon>Riboviria</taxon>
        <taxon>Pararnavirae</taxon>
        <taxon>Artverviricota</taxon>
        <taxon>Revtraviricetes</taxon>
        <taxon>Ortervirales</taxon>
        <taxon>Retroviridae</taxon>
        <taxon>Orthoretrovirinae</taxon>
        <taxon>Lentivirus</taxon>
        <taxon>Human immunodeficiency virus 2</taxon>
    </lineage>
</organism>
<gene>
    <name type="primary">vpr</name>
</gene>